<evidence type="ECO:0000250" key="1"/>
<evidence type="ECO:0000256" key="2">
    <source>
        <dbReference type="SAM" id="MobiDB-lite"/>
    </source>
</evidence>
<evidence type="ECO:0000269" key="3">
    <source>
    </source>
</evidence>
<evidence type="ECO:0000269" key="4">
    <source>
    </source>
</evidence>
<evidence type="ECO:0000269" key="5">
    <source>
    </source>
</evidence>
<evidence type="ECO:0000269" key="6">
    <source>
    </source>
</evidence>
<evidence type="ECO:0000269" key="7">
    <source>
    </source>
</evidence>
<evidence type="ECO:0000269" key="8">
    <source>
    </source>
</evidence>
<evidence type="ECO:0000269" key="9">
    <source>
    </source>
</evidence>
<evidence type="ECO:0000269" key="10">
    <source>
    </source>
</evidence>
<evidence type="ECO:0000269" key="11">
    <source>
    </source>
</evidence>
<evidence type="ECO:0000269" key="12">
    <source>
    </source>
</evidence>
<evidence type="ECO:0000305" key="13"/>
<evidence type="ECO:0007829" key="14">
    <source>
        <dbReference type="PDB" id="4ZRL"/>
    </source>
</evidence>
<evidence type="ECO:0007829" key="15">
    <source>
        <dbReference type="PDB" id="5JNB"/>
    </source>
</evidence>
<reference key="1">
    <citation type="journal article" date="2002" name="Nature">
        <title>A regulatory cytoplasmic poly(A) polymerase in Caenorhabditis elegans.</title>
        <authorList>
            <person name="Wang L."/>
            <person name="Eckmann C.R."/>
            <person name="Kadyk L.C."/>
            <person name="Wickens M."/>
            <person name="Kimble J."/>
        </authorList>
    </citation>
    <scope>NUCLEOTIDE SEQUENCE [MRNA] (ISOFORM A)</scope>
    <scope>FUNCTION</scope>
    <scope>SUBCELLULAR LOCATION</scope>
    <scope>TISSUE SPECIFICITY</scope>
    <scope>DEVELOPMENTAL STAGE</scope>
    <scope>INTERACTION WITH GLD-3</scope>
    <scope>DOMAIN</scope>
    <scope>MUTAGENESIS OF ASP-608 AND GLU-875</scope>
</reference>
<reference key="2">
    <citation type="journal article" date="1998" name="Science">
        <title>Genome sequence of the nematode C. elegans: a platform for investigating biology.</title>
        <authorList>
            <consortium name="The C. elegans sequencing consortium"/>
        </authorList>
    </citation>
    <scope>NUCLEOTIDE SEQUENCE [LARGE SCALE GENOMIC DNA]</scope>
    <scope>ALTERNATIVE SPLICING</scope>
    <source>
        <strain>Bristol N2</strain>
    </source>
</reference>
<reference key="3">
    <citation type="journal article" date="1998" name="Development">
        <title>Genetic regulation of entry into meiosis in Caenorhabditis elegans.</title>
        <authorList>
            <person name="Kadyk L.C."/>
            <person name="Kimble J."/>
        </authorList>
    </citation>
    <scope>FUNCTION</scope>
</reference>
<reference key="4">
    <citation type="journal article" date="2004" name="Development">
        <title>Control of the proliferation versus meiotic development decision in the C. elegans germline through regulation of GLD-1 protein accumulation.</title>
        <authorList>
            <person name="Hansen D."/>
            <person name="Wilson-Berry L."/>
            <person name="Dang T."/>
            <person name="Schedl T."/>
        </authorList>
    </citation>
    <scope>FUNCTION</scope>
</reference>
<reference key="5">
    <citation type="journal article" date="2004" name="Dev. Biol.">
        <title>Multi-pathway control of the proliferation versus meiotic development decision in the Caenorhabditis elegans germline.</title>
        <authorList>
            <person name="Hansen D."/>
            <person name="Hubbard E.J.A."/>
            <person name="Schedl T."/>
        </authorList>
    </citation>
    <scope>FUNCTION</scope>
</reference>
<reference key="6">
    <citation type="journal article" date="2004" name="Genetics">
        <title>GLD-3 and control of the mitosis/meiosis decision in the germline of Caenorhabditis elegans.</title>
        <authorList>
            <person name="Eckmann C.R."/>
            <person name="Crittenden S.L."/>
            <person name="Suh N."/>
            <person name="Kimble J."/>
        </authorList>
    </citation>
    <scope>INTERACTION WITH GLD-3</scope>
</reference>
<reference key="7">
    <citation type="journal article" date="2004" name="Genetics">
        <title>Caenorhabditis elegans atx-2 promotes germline proliferation and the oocyte fate.</title>
        <authorList>
            <person name="Maine E.M."/>
            <person name="Hansen D."/>
            <person name="Springer D."/>
            <person name="Vought V.E."/>
        </authorList>
    </citation>
    <scope>FUNCTION</scope>
</reference>
<reference key="8">
    <citation type="journal article" date="2004" name="RNA">
        <title>Tissue-specific modification of gld-2 mRNA in C. elegans: likely C-to-U editing.</title>
        <authorList>
            <person name="Wang L."/>
            <person name="Kimble J."/>
            <person name="Wickens M."/>
        </authorList>
    </citation>
    <scope>RNA EDITING</scope>
</reference>
<reference key="9">
    <citation type="journal article" date="2005" name="Genetics">
        <title>EGO-1, a putative RNA-directed RNA polymerase, promotes germline proliferation in parallel with GLP-1/notch signaling and regulates the spatial organization of nuclear pore complexes and germline P granules in Caenorhabditis elegans.</title>
        <authorList>
            <person name="Vought V.E."/>
            <person name="Ohmachi M."/>
            <person name="Lee M.-H."/>
            <person name="Maine E.M."/>
        </authorList>
    </citation>
    <scope>FUNCTION</scope>
</reference>
<reference key="10">
    <citation type="journal article" date="2006" name="Proc. Natl. Acad. Sci. U.S.A.">
        <title>The GLD-2 poly(A) polymerase activates gld-1 mRNA in the Caenorhabditis elegans germ line.</title>
        <authorList>
            <person name="Suh N."/>
            <person name="Jedamzik B."/>
            <person name="Eckmann C.R."/>
            <person name="Wickens M."/>
            <person name="Kimble J."/>
        </authorList>
    </citation>
    <scope>FUNCTION</scope>
</reference>
<reference key="11">
    <citation type="journal article" date="2015" name="Dev. Cell">
        <title>POS-1 Promotes Endo-mesoderm Development by Inhibiting the Cytoplasmic Polyadenylation of neg-1 mRNA.</title>
        <authorList>
            <person name="Elewa A."/>
            <person name="Shirayama M."/>
            <person name="Kaymak E."/>
            <person name="Harrison P.F."/>
            <person name="Powell D.R."/>
            <person name="Du Z."/>
            <person name="Chute C.D."/>
            <person name="Woolf H."/>
            <person name="Yi D."/>
            <person name="Ishidate T."/>
            <person name="Srinivasan J."/>
            <person name="Bao Z."/>
            <person name="Beilharz T.H."/>
            <person name="Ryder S.P."/>
            <person name="Mello C.C."/>
        </authorList>
    </citation>
    <scope>FUNCTION</scope>
    <scope>DISRUPTION PHENOTYPE</scope>
</reference>
<protein>
    <recommendedName>
        <fullName>Poly(A) RNA polymerase gld-2</fullName>
        <ecNumber evidence="3">2.7.7.19</ecNumber>
    </recommendedName>
    <alternativeName>
        <fullName>Defective in germ line development protein 2</fullName>
    </alternativeName>
</protein>
<organism>
    <name type="scientific">Caenorhabditis elegans</name>
    <dbReference type="NCBI Taxonomy" id="6239"/>
    <lineage>
        <taxon>Eukaryota</taxon>
        <taxon>Metazoa</taxon>
        <taxon>Ecdysozoa</taxon>
        <taxon>Nematoda</taxon>
        <taxon>Chromadorea</taxon>
        <taxon>Rhabditida</taxon>
        <taxon>Rhabditina</taxon>
        <taxon>Rhabditomorpha</taxon>
        <taxon>Rhabditoidea</taxon>
        <taxon>Rhabditidae</taxon>
        <taxon>Peloderinae</taxon>
        <taxon>Caenorhabditis</taxon>
    </lineage>
</organism>
<name>GLD2_CAEEL</name>
<keyword id="KW-0002">3D-structure</keyword>
<keyword id="KW-0025">Alternative splicing</keyword>
<keyword id="KW-0067">ATP-binding</keyword>
<keyword id="KW-0963">Cytoplasm</keyword>
<keyword id="KW-0217">Developmental protein</keyword>
<keyword id="KW-0460">Magnesium</keyword>
<keyword id="KW-0464">Manganese</keyword>
<keyword id="KW-0469">Meiosis</keyword>
<keyword id="KW-0479">Metal-binding</keyword>
<keyword id="KW-0507">mRNA processing</keyword>
<keyword id="KW-0547">Nucleotide-binding</keyword>
<keyword id="KW-1185">Reference proteome</keyword>
<keyword id="KW-0691">RNA editing</keyword>
<keyword id="KW-0808">Transferase</keyword>
<feature type="chain" id="PRO_0000341556" description="Poly(A) RNA polymerase gld-2">
    <location>
        <begin position="1"/>
        <end position="1113"/>
    </location>
</feature>
<feature type="domain" description="PAP-associated">
    <location>
        <begin position="780"/>
        <end position="816"/>
    </location>
</feature>
<feature type="region of interest" description="Disordered" evidence="2">
    <location>
        <begin position="1"/>
        <end position="113"/>
    </location>
</feature>
<feature type="region of interest" description="Disordered" evidence="2">
    <location>
        <begin position="134"/>
        <end position="175"/>
    </location>
</feature>
<feature type="region of interest" description="Disordered" evidence="2">
    <location>
        <begin position="205"/>
        <end position="266"/>
    </location>
</feature>
<feature type="region of interest" description="Disordered" evidence="2">
    <location>
        <begin position="445"/>
        <end position="513"/>
    </location>
</feature>
<feature type="region of interest" description="Disordered" evidence="2">
    <location>
        <begin position="817"/>
        <end position="854"/>
    </location>
</feature>
<feature type="region of interest" description="Disordered" evidence="2">
    <location>
        <begin position="966"/>
        <end position="1113"/>
    </location>
</feature>
<feature type="compositionally biased region" description="Low complexity" evidence="2">
    <location>
        <begin position="22"/>
        <end position="52"/>
    </location>
</feature>
<feature type="compositionally biased region" description="Polar residues" evidence="2">
    <location>
        <begin position="60"/>
        <end position="106"/>
    </location>
</feature>
<feature type="compositionally biased region" description="Low complexity" evidence="2">
    <location>
        <begin position="149"/>
        <end position="172"/>
    </location>
</feature>
<feature type="compositionally biased region" description="Pro residues" evidence="2">
    <location>
        <begin position="223"/>
        <end position="233"/>
    </location>
</feature>
<feature type="compositionally biased region" description="Basic and acidic residues" evidence="2">
    <location>
        <begin position="451"/>
        <end position="485"/>
    </location>
</feature>
<feature type="compositionally biased region" description="Low complexity" evidence="2">
    <location>
        <begin position="492"/>
        <end position="507"/>
    </location>
</feature>
<feature type="compositionally biased region" description="Polar residues" evidence="2">
    <location>
        <begin position="972"/>
        <end position="994"/>
    </location>
</feature>
<feature type="compositionally biased region" description="Low complexity" evidence="2">
    <location>
        <begin position="995"/>
        <end position="1035"/>
    </location>
</feature>
<feature type="compositionally biased region" description="Low complexity" evidence="2">
    <location>
        <begin position="1044"/>
        <end position="1061"/>
    </location>
</feature>
<feature type="compositionally biased region" description="Basic and acidic residues" evidence="2">
    <location>
        <begin position="1069"/>
        <end position="1084"/>
    </location>
</feature>
<feature type="binding site" evidence="13">
    <location>
        <position position="606"/>
    </location>
    <ligand>
        <name>Mg(2+)</name>
        <dbReference type="ChEBI" id="CHEBI:18420"/>
        <note>catalytic</note>
    </ligand>
</feature>
<feature type="binding site" evidence="13">
    <location>
        <position position="608"/>
    </location>
    <ligand>
        <name>Mg(2+)</name>
        <dbReference type="ChEBI" id="CHEBI:18420"/>
        <note>catalytic</note>
    </ligand>
</feature>
<feature type="splice variant" id="VSP_034328" description="In isoform b." evidence="13">
    <original>MVMAQQQKNAERNDEHTRRNRSPSVDSVSRVQQQSGGFAFYNQQSNHQYQQSHPRRTSFSRDGNTGYYNNHSGNKRQTYNNQRGGRSYNHRGNSNYQQNGEYSGNQGCVPKYHQRNQNYPQLQPKYSYFQPHQRPIFNSTQGYGTYSVRRSSPPSPSALSSSTANSTSNRAPTQPPILLRHAEPASDKNHQGSDHEQNHDPKIHLYRSAGTAPGGYTQCPSPYKQPPPQPPSTPSSSDKRIEQQQAEDWPTRFQHPPPQFRRGQDPMPASIELQHKTANQTMPVDIVQTNQQKTVSSYERAAQFRASASELPTDSVDAKHPCFANERMQSALIGISPQLKTQQQSPGIPIQNEAEASAVMKAMRSFQFHNWPQMSHGSYYPMPYHLENQMRPMKSGDQLPLNQQNHNLSGFPAFVGKSSLVGSSLNTRNSSEADPEEMPRIMEKLDDEVTGADHDKTIDENRRRIHKSQEPRIGTEEKALNE</original>
    <variation>MPSSIICDVSHEGEASGGPSPSSRISNGFSHTVCDLHHNFPIVKNRRKYHNSISTQSSSSTTTSLERISTSTCTSTSSSASDAIISRAEKDVQTFLVSDESTTGDHEEEEEDDEDGDDESDHNDYDYEDDGERSEHDHEQTDNDDDEDEIEPFVSSWCFAMGTQRSVMSSVGEKAPKSNVKSMEDWELDVVERAHRESHLAELYADLSWRFYTHPPTSFCLARVFLRHGLTGNEGVSSWK</variation>
    <location>
        <begin position="1"/>
        <end position="482"/>
    </location>
</feature>
<feature type="splice variant" id="VSP_034329" description="In isoform c." evidence="13">
    <original>MVMAQQQKNAERNDEHTRRNRSPSVDSVSRVQQQSGGFAFYNQQSNHQYQQSHPRRTSFSRDGNTGYYNNHSGNKRQTYNNQRGGRSYNHRGNSNYQQNGEYSGNQGCVPKYHQRNQNYPQLQPKYSYFQPHQRPIFNSTQGYGTYSVRRSSPPSPSALSSSTANSTSNRAPTQPPILLRHAEPASDKNHQGSDHEQNHDPKIHLYRSAGTAPGGYTQCPSPYKQPPPQPPSTPSSSDKRIEQQQAEDWPTRFQHPPPQFRRGQDPMPASIELQHKTANQTMPVDIVQTNQQKTVSSYERAAQFRASASELPTDSVDAKHPCFANERMQSALIG</original>
    <variation>MPLSTGSIDSGFFGCTTNDSLKKGDIEDPQKTTPLSMTDEEETFSTSSSGFSQSSAPPLGDAILSSSNSTSSYLTLNSGAYPRKHRTRVRRSNRKLKRLPQNMSMRFESSSLFSNTLTESLETASCCVSVAGSSRSSLSSSSNSANASYDDMVIRLYFYFKSLLIAINHQKMICESIAYLVKDFDARWGNSGVRKKACDPKGCLAPIYTSSRNTDGGLDKKLVKPANFPMCWAVPQPAIFYQLMAIDVVEYIKFLER</variation>
    <location>
        <begin position="1"/>
        <end position="334"/>
    </location>
</feature>
<feature type="sequence variant" description="In RNA edited version.">
    <original>P</original>
    <variation>L</variation>
    <location>
        <position position="400"/>
    </location>
</feature>
<feature type="mutagenesis site" description="Loss of enzyme activity." evidence="3">
    <original>D</original>
    <variation>A</variation>
    <location>
        <position position="608"/>
    </location>
</feature>
<feature type="mutagenesis site" description="In h292; induces defects in entry into meiosis and abolishes interaction with gld-3." evidence="3">
    <original>E</original>
    <variation>K</variation>
    <location>
        <position position="875"/>
    </location>
</feature>
<feature type="helix" evidence="14">
    <location>
        <begin position="548"/>
        <end position="560"/>
    </location>
</feature>
<feature type="helix" evidence="14">
    <location>
        <begin position="564"/>
        <end position="581"/>
    </location>
</feature>
<feature type="turn" evidence="14">
    <location>
        <begin position="582"/>
        <end position="584"/>
    </location>
</feature>
<feature type="strand" evidence="14">
    <location>
        <begin position="589"/>
        <end position="593"/>
    </location>
</feature>
<feature type="helix" evidence="14">
    <location>
        <begin position="594"/>
        <end position="596"/>
    </location>
</feature>
<feature type="strand" evidence="14">
    <location>
        <begin position="605"/>
        <end position="612"/>
    </location>
</feature>
<feature type="turn" evidence="14">
    <location>
        <begin position="620"/>
        <end position="622"/>
    </location>
</feature>
<feature type="helix" evidence="14">
    <location>
        <begin position="623"/>
        <end position="635"/>
    </location>
</feature>
<feature type="strand" evidence="14">
    <location>
        <begin position="641"/>
        <end position="647"/>
    </location>
</feature>
<feature type="strand" evidence="14">
    <location>
        <begin position="649"/>
        <end position="651"/>
    </location>
</feature>
<feature type="strand" evidence="14">
    <location>
        <begin position="653"/>
        <end position="658"/>
    </location>
</feature>
<feature type="helix" evidence="14">
    <location>
        <begin position="660"/>
        <end position="662"/>
    </location>
</feature>
<feature type="strand" evidence="14">
    <location>
        <begin position="666"/>
        <end position="672"/>
    </location>
</feature>
<feature type="helix" evidence="14">
    <location>
        <begin position="675"/>
        <end position="686"/>
    </location>
</feature>
<feature type="turn" evidence="14">
    <location>
        <begin position="687"/>
        <end position="689"/>
    </location>
</feature>
<feature type="helix" evidence="14">
    <location>
        <begin position="693"/>
        <end position="706"/>
    </location>
</feature>
<feature type="strand" evidence="14">
    <location>
        <begin position="712"/>
        <end position="716"/>
    </location>
</feature>
<feature type="helix" evidence="14">
    <location>
        <begin position="719"/>
        <end position="732"/>
    </location>
</feature>
<feature type="strand" evidence="14">
    <location>
        <begin position="733"/>
        <end position="735"/>
    </location>
</feature>
<feature type="helix" evidence="14">
    <location>
        <begin position="741"/>
        <end position="744"/>
    </location>
</feature>
<feature type="turn" evidence="14">
    <location>
        <begin position="746"/>
        <end position="748"/>
    </location>
</feature>
<feature type="strand" evidence="14">
    <location>
        <begin position="749"/>
        <end position="753"/>
    </location>
</feature>
<feature type="helix" evidence="14">
    <location>
        <begin position="755"/>
        <end position="757"/>
    </location>
</feature>
<feature type="turn" evidence="15">
    <location>
        <begin position="773"/>
        <end position="775"/>
    </location>
</feature>
<feature type="helix" evidence="15">
    <location>
        <begin position="776"/>
        <end position="778"/>
    </location>
</feature>
<feature type="helix" evidence="14">
    <location>
        <begin position="781"/>
        <end position="791"/>
    </location>
</feature>
<feature type="helix" evidence="14">
    <location>
        <begin position="795"/>
        <end position="797"/>
    </location>
</feature>
<feature type="turn" evidence="15">
    <location>
        <begin position="798"/>
        <end position="800"/>
    </location>
</feature>
<feature type="strand" evidence="15">
    <location>
        <begin position="801"/>
        <end position="804"/>
    </location>
</feature>
<feature type="turn" evidence="15">
    <location>
        <begin position="805"/>
        <end position="808"/>
    </location>
</feature>
<feature type="strand" evidence="15">
    <location>
        <begin position="809"/>
        <end position="812"/>
    </location>
</feature>
<feature type="turn" evidence="14">
    <location>
        <begin position="861"/>
        <end position="865"/>
    </location>
</feature>
<feature type="helix" evidence="14">
    <location>
        <begin position="869"/>
        <end position="871"/>
    </location>
</feature>
<feature type="helix" evidence="14">
    <location>
        <begin position="886"/>
        <end position="909"/>
    </location>
</feature>
<feature type="helix" evidence="14">
    <location>
        <begin position="912"/>
        <end position="916"/>
    </location>
</feature>
<accession>O17087</accession>
<accession>Q86S49</accession>
<accession>Q86S50</accession>
<accession>Q86S51</accession>
<dbReference type="EC" id="2.7.7.19" evidence="3"/>
<dbReference type="EMBL" id="AY125085">
    <property type="protein sequence ID" value="AAM94369.1"/>
    <property type="molecule type" value="mRNA"/>
</dbReference>
<dbReference type="EMBL" id="FO081588">
    <property type="protein sequence ID" value="CCD72658.1"/>
    <property type="molecule type" value="Genomic_DNA"/>
</dbReference>
<dbReference type="EMBL" id="FO081588">
    <property type="protein sequence ID" value="CCD72659.1"/>
    <property type="molecule type" value="Genomic_DNA"/>
</dbReference>
<dbReference type="EMBL" id="FO081588">
    <property type="protein sequence ID" value="CCD72660.1"/>
    <property type="molecule type" value="Genomic_DNA"/>
</dbReference>
<dbReference type="EMBL" id="FO081588">
    <property type="protein sequence ID" value="CCD72661.1"/>
    <property type="molecule type" value="Genomic_DNA"/>
</dbReference>
<dbReference type="PIR" id="T32274">
    <property type="entry name" value="T32274"/>
</dbReference>
<dbReference type="PIR" id="T32275">
    <property type="entry name" value="T32275"/>
</dbReference>
<dbReference type="RefSeq" id="NP_001021844.1">
    <molecule id="O17087-2"/>
    <property type="nucleotide sequence ID" value="NM_001026673.3"/>
</dbReference>
<dbReference type="RefSeq" id="NP_001021845.1">
    <property type="nucleotide sequence ID" value="NM_001026674.1"/>
</dbReference>
<dbReference type="RefSeq" id="NP_491841.2">
    <molecule id="O17087-3"/>
    <property type="nucleotide sequence ID" value="NM_059440.2"/>
</dbReference>
<dbReference type="RefSeq" id="NP_491842.2">
    <molecule id="O17087-1"/>
    <property type="nucleotide sequence ID" value="NM_059441.4"/>
</dbReference>
<dbReference type="PDB" id="4ZRL">
    <property type="method" value="X-ray"/>
    <property type="resolution" value="2.28 A"/>
    <property type="chains" value="A=528-923"/>
</dbReference>
<dbReference type="PDB" id="5JNB">
    <property type="method" value="X-ray"/>
    <property type="resolution" value="2.49 A"/>
    <property type="chains" value="A/B/C/D=546-923"/>
</dbReference>
<dbReference type="PDBsum" id="4ZRL"/>
<dbReference type="PDBsum" id="5JNB"/>
<dbReference type="SMR" id="O17087"/>
<dbReference type="BioGRID" id="37791">
    <property type="interactions" value="14"/>
</dbReference>
<dbReference type="ComplexPortal" id="CPX-1214">
    <property type="entry name" value="GLD-2-GLD-3 complex"/>
</dbReference>
<dbReference type="FunCoup" id="O17087">
    <property type="interactions" value="4"/>
</dbReference>
<dbReference type="IntAct" id="O17087">
    <property type="interactions" value="2"/>
</dbReference>
<dbReference type="STRING" id="6239.ZC308.1a.1"/>
<dbReference type="PaxDb" id="6239-ZC308.1a"/>
<dbReference type="PeptideAtlas" id="O17087"/>
<dbReference type="DNASU" id="172338"/>
<dbReference type="EnsemblMetazoa" id="ZC308.1a.1">
    <molecule id="O17087-1"/>
    <property type="protein sequence ID" value="ZC308.1a.1"/>
    <property type="gene ID" value="WBGene00001596"/>
</dbReference>
<dbReference type="EnsemblMetazoa" id="ZC308.1a.2">
    <molecule id="O17087-1"/>
    <property type="protein sequence ID" value="ZC308.1a.2"/>
    <property type="gene ID" value="WBGene00001596"/>
</dbReference>
<dbReference type="EnsemblMetazoa" id="ZC308.1b.1">
    <molecule id="O17087-2"/>
    <property type="protein sequence ID" value="ZC308.1b.1"/>
    <property type="gene ID" value="WBGene00001596"/>
</dbReference>
<dbReference type="EnsemblMetazoa" id="ZC308.1c.1">
    <molecule id="O17087-3"/>
    <property type="protein sequence ID" value="ZC308.1c.1"/>
    <property type="gene ID" value="WBGene00001596"/>
</dbReference>
<dbReference type="GeneID" id="172338"/>
<dbReference type="KEGG" id="cel:CELE_ZC308.1"/>
<dbReference type="UCSC" id="ZC308.1a">
    <molecule id="O17087-1"/>
    <property type="organism name" value="c. elegans"/>
</dbReference>
<dbReference type="AGR" id="WB:WBGene00001596"/>
<dbReference type="CTD" id="172338"/>
<dbReference type="WormBase" id="ZC308.1a">
    <molecule id="O17087-1"/>
    <property type="protein sequence ID" value="CE32766"/>
    <property type="gene ID" value="WBGene00001596"/>
    <property type="gene designation" value="gld-2"/>
</dbReference>
<dbReference type="WormBase" id="ZC308.1b">
    <molecule id="O17087-2"/>
    <property type="protein sequence ID" value="CE15159"/>
    <property type="gene ID" value="WBGene00001596"/>
    <property type="gene designation" value="gld-2"/>
</dbReference>
<dbReference type="WormBase" id="ZC308.1c">
    <molecule id="O17087-3"/>
    <property type="protein sequence ID" value="CE33255"/>
    <property type="gene ID" value="WBGene00001596"/>
    <property type="gene designation" value="gld-2"/>
</dbReference>
<dbReference type="eggNOG" id="KOG2277">
    <property type="taxonomic scope" value="Eukaryota"/>
</dbReference>
<dbReference type="GeneTree" id="ENSGT00970000196213"/>
<dbReference type="HOGENOM" id="CLU_009389_0_0_1"/>
<dbReference type="InParanoid" id="O17087"/>
<dbReference type="OMA" id="SSWCFAM"/>
<dbReference type="OrthoDB" id="2274644at2759"/>
<dbReference type="BRENDA" id="2.7.7.19">
    <property type="organism ID" value="1045"/>
</dbReference>
<dbReference type="CD-CODE" id="73A75392">
    <property type="entry name" value="P-granule"/>
</dbReference>
<dbReference type="EvolutionaryTrace" id="O17087"/>
<dbReference type="PRO" id="PR:O17087"/>
<dbReference type="Proteomes" id="UP000001940">
    <property type="component" value="Chromosome I"/>
</dbReference>
<dbReference type="Bgee" id="WBGene00001596">
    <property type="expression patterns" value="Expressed in germ line (C elegans) and 4 other cell types or tissues"/>
</dbReference>
<dbReference type="ExpressionAtlas" id="O17087">
    <property type="expression patterns" value="baseline and differential"/>
</dbReference>
<dbReference type="GO" id="GO:0005737">
    <property type="term" value="C:cytoplasm"/>
    <property type="evidence" value="ECO:0000314"/>
    <property type="project" value="WormBase"/>
</dbReference>
<dbReference type="GO" id="GO:0043186">
    <property type="term" value="C:P granule"/>
    <property type="evidence" value="ECO:0000314"/>
    <property type="project" value="WormBase"/>
</dbReference>
<dbReference type="GO" id="GO:0032991">
    <property type="term" value="C:protein-containing complex"/>
    <property type="evidence" value="ECO:0000314"/>
    <property type="project" value="WormBase"/>
</dbReference>
<dbReference type="GO" id="GO:0030880">
    <property type="term" value="C:RNA polymerase complex"/>
    <property type="evidence" value="ECO:0000269"/>
    <property type="project" value="ComplexPortal"/>
</dbReference>
<dbReference type="GO" id="GO:0031379">
    <property type="term" value="C:RNA-directed RNA polymerase complex"/>
    <property type="evidence" value="ECO:0000353"/>
    <property type="project" value="WormBase"/>
</dbReference>
<dbReference type="GO" id="GO:0005524">
    <property type="term" value="F:ATP binding"/>
    <property type="evidence" value="ECO:0007669"/>
    <property type="project" value="UniProtKB-KW"/>
</dbReference>
<dbReference type="GO" id="GO:0046872">
    <property type="term" value="F:metal ion binding"/>
    <property type="evidence" value="ECO:0007669"/>
    <property type="project" value="UniProtKB-KW"/>
</dbReference>
<dbReference type="GO" id="GO:1990817">
    <property type="term" value="F:poly(A) RNA polymerase activity"/>
    <property type="evidence" value="ECO:0000314"/>
    <property type="project" value="WormBase"/>
</dbReference>
<dbReference type="GO" id="GO:0180011">
    <property type="term" value="P:cytosolic mRNA polyadenylation"/>
    <property type="evidence" value="ECO:0000314"/>
    <property type="project" value="WormBase"/>
</dbReference>
<dbReference type="GO" id="GO:0009792">
    <property type="term" value="P:embryo development ending in birth or egg hatching"/>
    <property type="evidence" value="ECO:0000315"/>
    <property type="project" value="WormBase"/>
</dbReference>
<dbReference type="GO" id="GO:0051321">
    <property type="term" value="P:meiotic cell cycle"/>
    <property type="evidence" value="ECO:0007669"/>
    <property type="project" value="UniProtKB-KW"/>
</dbReference>
<dbReference type="GO" id="GO:0006397">
    <property type="term" value="P:mRNA processing"/>
    <property type="evidence" value="ECO:0000269"/>
    <property type="project" value="ComplexPortal"/>
</dbReference>
<dbReference type="GO" id="GO:0006997">
    <property type="term" value="P:nucleus organization"/>
    <property type="evidence" value="ECO:0000315"/>
    <property type="project" value="WormBase"/>
</dbReference>
<dbReference type="GO" id="GO:0060903">
    <property type="term" value="P:positive regulation of meiosis I"/>
    <property type="evidence" value="ECO:0000316"/>
    <property type="project" value="UniProtKB"/>
</dbReference>
<dbReference type="GO" id="GO:0045840">
    <property type="term" value="P:positive regulation of mitotic nuclear division"/>
    <property type="evidence" value="ECO:0000269"/>
    <property type="project" value="ComplexPortal"/>
</dbReference>
<dbReference type="GO" id="GO:0051302">
    <property type="term" value="P:regulation of cell division"/>
    <property type="evidence" value="ECO:0000315"/>
    <property type="project" value="WormBase"/>
</dbReference>
<dbReference type="GO" id="GO:0031123">
    <property type="term" value="P:RNA 3'-end processing"/>
    <property type="evidence" value="ECO:0000318"/>
    <property type="project" value="GO_Central"/>
</dbReference>
<dbReference type="CDD" id="cd05402">
    <property type="entry name" value="NT_PAP_TUTase"/>
    <property type="match status" value="1"/>
</dbReference>
<dbReference type="FunFam" id="3.30.460.10:FF:000061">
    <property type="entry name" value="Poly(A) RNA polymerase gld-2"/>
    <property type="match status" value="1"/>
</dbReference>
<dbReference type="Gene3D" id="1.10.1410.10">
    <property type="match status" value="1"/>
</dbReference>
<dbReference type="Gene3D" id="3.30.460.10">
    <property type="entry name" value="Beta Polymerase, domain 2"/>
    <property type="match status" value="1"/>
</dbReference>
<dbReference type="InterPro" id="IPR054708">
    <property type="entry name" value="MTPAP-like_central"/>
</dbReference>
<dbReference type="InterPro" id="IPR043519">
    <property type="entry name" value="NT_sf"/>
</dbReference>
<dbReference type="InterPro" id="IPR002058">
    <property type="entry name" value="PAP_assoc"/>
</dbReference>
<dbReference type="PANTHER" id="PTHR12271">
    <property type="entry name" value="POLY A POLYMERASE CID PAP -RELATED"/>
    <property type="match status" value="1"/>
</dbReference>
<dbReference type="PANTHER" id="PTHR12271:SF40">
    <property type="entry name" value="POLY(A) RNA POLYMERASE GLD2"/>
    <property type="match status" value="1"/>
</dbReference>
<dbReference type="Pfam" id="PF22600">
    <property type="entry name" value="MTPAP-like_central"/>
    <property type="match status" value="1"/>
</dbReference>
<dbReference type="Pfam" id="PF03828">
    <property type="entry name" value="PAP_assoc"/>
    <property type="match status" value="1"/>
</dbReference>
<dbReference type="SUPFAM" id="SSF81301">
    <property type="entry name" value="Nucleotidyltransferase"/>
    <property type="match status" value="1"/>
</dbReference>
<dbReference type="SUPFAM" id="SSF81631">
    <property type="entry name" value="PAP/OAS1 substrate-binding domain"/>
    <property type="match status" value="1"/>
</dbReference>
<proteinExistence type="evidence at protein level"/>
<sequence length="1113" mass="124612">MVMAQQQKNAERNDEHTRRNRSPSVDSVSRVQQQSGGFAFYNQQSNHQYQQSHPRRTSFSRDGNTGYYNNHSGNKRQTYNNQRGGRSYNHRGNSNYQQNGEYSGNQGCVPKYHQRNQNYPQLQPKYSYFQPHQRPIFNSTQGYGTYSVRRSSPPSPSALSSSTANSTSNRAPTQPPILLRHAEPASDKNHQGSDHEQNHDPKIHLYRSAGTAPGGYTQCPSPYKQPPPQPPSTPSSSDKRIEQQQAEDWPTRFQHPPPQFRRGQDPMPASIELQHKTANQTMPVDIVQTNQQKTVSSYERAAQFRASASELPTDSVDAKHPCFANERMQSALIGISPQLKTQQQSPGIPIQNEAEASAVMKAMRSFQFHNWPQMSHGSYYPMPYHLENQMRPMKSGDQLPLNQQNHNLSGFPAFVGKSSLVGSSLNTRNSSEADPEEMPRIMEKLDDEVTGADHDKTIDENRRRIHKSQEPRIGTEEKALNELPRKANRRNSSCSSISSVSESSSPSALDESTLTKILPTDNFRGGRGFASPSPPTSLLSEPLSRMDVLSEKIWDYHNKVSQTDEMLQRKLHLRDMLYTAISPVFPLSGLYVVGSSLNGFGNNSSDMDLCLMITNKDLDQKNDAVVVLNLILSTLQYEKFVESQKLILAKVPILRINFAAPFDDITVDLNANNSVAIRNTHLLCYYSSYDWRVRPLVSVVKEWAKRKGINDANKSSFTSYSLVLMVIHFLQCGPTKVLPNLQQSYPNRFSNKVDVRTLNVTMALEEVADDIDQSLSEKTTLGELLIGFLDYYANEFNYDRDAISIRQGRRVERAALAVRPKIHSNSEGDKETPPPSSSASTSSIHNGGTPGIPMHHSISNPHFWRSQWRCVCIEEPFTNSNTAHSIYDEMVFEAIKKAFREAHGELQHNHDLDKLMECEPIKASTTNTGAAVFAATYEGERPLAQQPNTIACASLRVLNSIPVSSGPGHYHYQQQSNQNLSRPQRPGSNQGYQMNNNRGFNGNNQQQHQNRRSFNNQSSSNPGNGSTGPRSSRSNENVRDSSRQQNSQKGSSGVSVSKENVASTTGVPVDKKQQNSNRKDDGNRTKRSPMVQSPEPAKTKSEKTPMASSNVSQ</sequence>
<comment type="function">
    <text evidence="3 4 5 8 9 10 11 12">Cytoplasmic poly(A) RNA polymerase that adds successive AMP monomers to the 3'-end of specific RNAs, forming a poly(A) tail. Acts as a regulator of mitosis/meiosis required for progression through meiotic prophase during oogenesis and spermatogenesis and for promotion of the entry into meiosis from the mitotic cell cycle. May act by regulating and activating gld-1 mRNA activity in germline. Required for polyadenylation of neg-1 mRNA during embryogenesis (PubMed:26096734).</text>
</comment>
<comment type="catalytic activity">
    <reaction evidence="3">
        <text>RNA(n) + ATP = RNA(n)-3'-adenine ribonucleotide + diphosphate</text>
        <dbReference type="Rhea" id="RHEA:11332"/>
        <dbReference type="Rhea" id="RHEA-COMP:14527"/>
        <dbReference type="Rhea" id="RHEA-COMP:17347"/>
        <dbReference type="ChEBI" id="CHEBI:30616"/>
        <dbReference type="ChEBI" id="CHEBI:33019"/>
        <dbReference type="ChEBI" id="CHEBI:140395"/>
        <dbReference type="ChEBI" id="CHEBI:173115"/>
        <dbReference type="EC" id="2.7.7.19"/>
    </reaction>
    <physiologicalReaction direction="left-to-right" evidence="3">
        <dbReference type="Rhea" id="RHEA:11333"/>
    </physiologicalReaction>
</comment>
<comment type="cofactor">
    <cofactor evidence="1">
        <name>Mg(2+)</name>
        <dbReference type="ChEBI" id="CHEBI:18420"/>
    </cofactor>
    <cofactor evidence="1">
        <name>Mn(2+)</name>
        <dbReference type="ChEBI" id="CHEBI:29035"/>
    </cofactor>
</comment>
<comment type="subunit">
    <text evidence="3 7">Interacts with gld-3.</text>
</comment>
<comment type="interaction">
    <interactant intactId="EBI-2420017">
        <id>O17087</id>
    </interactant>
    <interactant intactId="EBI-317828">
        <id>Q95ZK7</id>
        <label>gld-3</label>
    </interactant>
    <organismsDiffer>false</organismsDiffer>
    <experiments>2</experiments>
</comment>
<comment type="subcellular location">
    <subcellularLocation>
        <location evidence="3">Cytoplasm</location>
    </subcellularLocation>
</comment>
<comment type="alternative products">
    <event type="alternative splicing"/>
    <isoform>
        <id>O17087-1</id>
        <name>a</name>
        <sequence type="displayed"/>
    </isoform>
    <isoform>
        <id>O17087-2</id>
        <name>b</name>
        <sequence type="described" ref="VSP_034328"/>
    </isoform>
    <isoform>
        <id>O17087-3</id>
        <name>c</name>
        <sequence type="described" ref="VSP_034329"/>
    </isoform>
</comment>
<comment type="tissue specificity">
    <text evidence="3">Germline-specific.</text>
</comment>
<comment type="developmental stage">
    <text evidence="3">Abundant in embryos, fourth larval stages and adults.</text>
</comment>
<comment type="domain">
    <text evidence="3">In contrast to other poly(A) RNA polymerases, lacks any RNA-binding domain. RNA-binding is mediated through its interaction with gld-3.</text>
</comment>
<comment type="RNA editing">
    <location>
        <position position="400" evidence="6"/>
    </location>
    <text>Partially edited. RNA editing takes place in most germline-specific transcripts.</text>
</comment>
<comment type="disruption phenotype">
    <text evidence="11">RNAi-mediated knockdown leads to a shorter polyadenylation tail in neg-1 mRNA in embryos.</text>
</comment>
<comment type="similarity">
    <text evidence="13">Belongs to the DNA polymerase type-B-like family. GLD2 subfamily.</text>
</comment>
<gene>
    <name type="primary">gld-2</name>
    <name type="ORF">ZC308.1</name>
</gene>